<dbReference type="EMBL" id="LT708304">
    <property type="protein sequence ID" value="SIT99908.1"/>
    <property type="molecule type" value="Genomic_DNA"/>
</dbReference>
<dbReference type="RefSeq" id="NP_854959.1">
    <property type="nucleotide sequence ID" value="NC_002945.3"/>
</dbReference>
<dbReference type="RefSeq" id="WP_003406577.1">
    <property type="nucleotide sequence ID" value="NC_002945.4"/>
</dbReference>
<dbReference type="KEGG" id="mbo:BQ2027_MB1305"/>
<dbReference type="PATRIC" id="fig|233413.5.peg.1430"/>
<dbReference type="Proteomes" id="UP000001419">
    <property type="component" value="Chromosome"/>
</dbReference>
<dbReference type="GO" id="GO:0005886">
    <property type="term" value="C:plasma membrane"/>
    <property type="evidence" value="ECO:0007669"/>
    <property type="project" value="UniProtKB-SubCell"/>
</dbReference>
<dbReference type="InterPro" id="IPR024520">
    <property type="entry name" value="DUF3558"/>
</dbReference>
<dbReference type="Pfam" id="PF12079">
    <property type="entry name" value="DUF3558"/>
    <property type="match status" value="1"/>
</dbReference>
<dbReference type="PROSITE" id="PS51257">
    <property type="entry name" value="PROKAR_LIPOPROTEIN"/>
    <property type="match status" value="1"/>
</dbReference>
<protein>
    <recommendedName>
        <fullName>Putative lipoprotein LprB</fullName>
    </recommendedName>
</protein>
<comment type="subcellular location">
    <subcellularLocation>
        <location evidence="1">Cell membrane</location>
        <topology evidence="1">Lipid-anchor</topology>
    </subcellularLocation>
</comment>
<feature type="signal peptide" evidence="1">
    <location>
        <begin position="1"/>
        <end position="24"/>
    </location>
</feature>
<feature type="chain" id="PRO_0000018136" description="Putative lipoprotein LprB">
    <location>
        <begin position="25"/>
        <end position="185"/>
    </location>
</feature>
<feature type="region of interest" description="Disordered" evidence="2">
    <location>
        <begin position="26"/>
        <end position="50"/>
    </location>
</feature>
<feature type="lipid moiety-binding region" description="N-palmitoyl cysteine" evidence="1">
    <location>
        <position position="25"/>
    </location>
</feature>
<feature type="lipid moiety-binding region" description="S-diacylglycerol cysteine" evidence="1">
    <location>
        <position position="25"/>
    </location>
</feature>
<accession>Q7U093</accession>
<accession>A0A1R3XXV3</accession>
<accession>X2BH93</accession>
<reference key="1">
    <citation type="journal article" date="2003" name="Proc. Natl. Acad. Sci. U.S.A.">
        <title>The complete genome sequence of Mycobacterium bovis.</title>
        <authorList>
            <person name="Garnier T."/>
            <person name="Eiglmeier K."/>
            <person name="Camus J.-C."/>
            <person name="Medina N."/>
            <person name="Mansoor H."/>
            <person name="Pryor M."/>
            <person name="Duthoy S."/>
            <person name="Grondin S."/>
            <person name="Lacroix C."/>
            <person name="Monsempe C."/>
            <person name="Simon S."/>
            <person name="Harris B."/>
            <person name="Atkin R."/>
            <person name="Doggett J."/>
            <person name="Mayes R."/>
            <person name="Keating L."/>
            <person name="Wheeler P.R."/>
            <person name="Parkhill J."/>
            <person name="Barrell B.G."/>
            <person name="Cole S.T."/>
            <person name="Gordon S.V."/>
            <person name="Hewinson R.G."/>
        </authorList>
    </citation>
    <scope>NUCLEOTIDE SEQUENCE [LARGE SCALE GENOMIC DNA]</scope>
    <source>
        <strain>ATCC BAA-935 / AF2122/97</strain>
    </source>
</reference>
<reference key="2">
    <citation type="journal article" date="2017" name="Genome Announc.">
        <title>Updated reference genome sequence and annotation of Mycobacterium bovis AF2122/97.</title>
        <authorList>
            <person name="Malone K.M."/>
            <person name="Farrell D."/>
            <person name="Stuber T.P."/>
            <person name="Schubert O.T."/>
            <person name="Aebersold R."/>
            <person name="Robbe-Austerman S."/>
            <person name="Gordon S.V."/>
        </authorList>
    </citation>
    <scope>NUCLEOTIDE SEQUENCE [LARGE SCALE GENOMIC DNA]</scope>
    <scope>GENOME REANNOTATION</scope>
    <source>
        <strain>ATCC BAA-935 / AF2122/97</strain>
    </source>
</reference>
<sequence length="185" mass="19723">MRRKVRRLTLAVSALVALFPAVAGCSDSGDNKPGATIPSTPANAEGRHGPFFPQCGGVSDQTVTELTRVTGLVNTAKNSVGCQWLAGGGILGPHFSFSWYRGSPIGRERKTEELSRASVEDINIDGHSGFIAIGNEPSLGDSLCEVGIQFSDDFIEWSVSFSQKPFPPPCDIAKELTRQSIANSK</sequence>
<gene>
    <name type="primary">lprB</name>
    <name type="ordered locus">BQ2027_MB1305</name>
</gene>
<keyword id="KW-1003">Cell membrane</keyword>
<keyword id="KW-0449">Lipoprotein</keyword>
<keyword id="KW-0472">Membrane</keyword>
<keyword id="KW-0564">Palmitate</keyword>
<keyword id="KW-1185">Reference proteome</keyword>
<keyword id="KW-0732">Signal</keyword>
<proteinExistence type="inferred from homology"/>
<evidence type="ECO:0000255" key="1">
    <source>
        <dbReference type="PROSITE-ProRule" id="PRU00303"/>
    </source>
</evidence>
<evidence type="ECO:0000256" key="2">
    <source>
        <dbReference type="SAM" id="MobiDB-lite"/>
    </source>
</evidence>
<organism>
    <name type="scientific">Mycobacterium bovis (strain ATCC BAA-935 / AF2122/97)</name>
    <dbReference type="NCBI Taxonomy" id="233413"/>
    <lineage>
        <taxon>Bacteria</taxon>
        <taxon>Bacillati</taxon>
        <taxon>Actinomycetota</taxon>
        <taxon>Actinomycetes</taxon>
        <taxon>Mycobacteriales</taxon>
        <taxon>Mycobacteriaceae</taxon>
        <taxon>Mycobacterium</taxon>
        <taxon>Mycobacterium tuberculosis complex</taxon>
    </lineage>
</organism>
<name>LPRB_MYCBO</name>